<proteinExistence type="evidence at protein level"/>
<dbReference type="EMBL" id="AJ276590">
    <property type="protein sequence ID" value="CAB91651.1"/>
    <property type="molecule type" value="mRNA"/>
</dbReference>
<dbReference type="EMBL" id="FO081227">
    <property type="protein sequence ID" value="CCD70053.1"/>
    <property type="molecule type" value="Genomic_DNA"/>
</dbReference>
<dbReference type="EMBL" id="FO081227">
    <property type="protein sequence ID" value="CCD70054.1"/>
    <property type="molecule type" value="Genomic_DNA"/>
</dbReference>
<dbReference type="PIR" id="T33295">
    <property type="entry name" value="T33295"/>
</dbReference>
<dbReference type="RefSeq" id="NP_001023850.1">
    <property type="nucleotide sequence ID" value="NM_001028679.3"/>
</dbReference>
<dbReference type="RefSeq" id="NP_001023851.1">
    <molecule id="O61967-1"/>
    <property type="nucleotide sequence ID" value="NM_001028680.7"/>
</dbReference>
<dbReference type="RefSeq" id="NP_001362184.1">
    <molecule id="O61967-2"/>
    <property type="nucleotide sequence ID" value="NM_001374917.4"/>
</dbReference>
<dbReference type="SMR" id="O61967"/>
<dbReference type="BioGRID" id="44213">
    <property type="interactions" value="25"/>
</dbReference>
<dbReference type="DIP" id="DIP-25349N"/>
<dbReference type="FunCoup" id="O61967">
    <property type="interactions" value="206"/>
</dbReference>
<dbReference type="IntAct" id="O61967">
    <property type="interactions" value="7"/>
</dbReference>
<dbReference type="STRING" id="6239.F26D11.11b.1"/>
<dbReference type="iPTMnet" id="O61967"/>
<dbReference type="PaxDb" id="6239-F26D11.11b"/>
<dbReference type="PeptideAtlas" id="O61967"/>
<dbReference type="EnsemblMetazoa" id="F26D11.11a.1">
    <property type="protein sequence ID" value="F26D11.11a.1"/>
    <property type="gene ID" value="WBGene00002632"/>
</dbReference>
<dbReference type="EnsemblMetazoa" id="F26D11.11b.1">
    <molecule id="O61967-1"/>
    <property type="protein sequence ID" value="F26D11.11b.1"/>
    <property type="gene ID" value="WBGene00002632"/>
</dbReference>
<dbReference type="GeneID" id="179171"/>
<dbReference type="KEGG" id="cel:CELE_F26D11.11"/>
<dbReference type="UCSC" id="F26D11.11a">
    <molecule id="O61967-1"/>
    <property type="organism name" value="c. elegans"/>
</dbReference>
<dbReference type="AGR" id="WB:WBGene00002632"/>
<dbReference type="CTD" id="179171"/>
<dbReference type="WormBase" id="F26D11.11a">
    <molecule id="O61967-2"/>
    <property type="protein sequence ID" value="CE29778"/>
    <property type="gene ID" value="WBGene00002632"/>
    <property type="gene designation" value="let-413"/>
</dbReference>
<dbReference type="WormBase" id="F26D11.11b">
    <molecule id="O61967-1"/>
    <property type="protein sequence ID" value="CE37008"/>
    <property type="gene ID" value="WBGene00002632"/>
    <property type="gene designation" value="let-413"/>
</dbReference>
<dbReference type="eggNOG" id="KOG0619">
    <property type="taxonomic scope" value="Eukaryota"/>
</dbReference>
<dbReference type="eggNOG" id="KOG3528">
    <property type="taxonomic scope" value="Eukaryota"/>
</dbReference>
<dbReference type="GeneTree" id="ENSGT00940000164066"/>
<dbReference type="HOGENOM" id="CLU_000288_18_23_1"/>
<dbReference type="InParanoid" id="O61967"/>
<dbReference type="OMA" id="HEIDQPR"/>
<dbReference type="OrthoDB" id="2187496at2759"/>
<dbReference type="PhylomeDB" id="O61967"/>
<dbReference type="Reactome" id="R-CEL-438066">
    <property type="pathway name" value="Unblocking of NMDA receptors, glutamate binding and activation"/>
</dbReference>
<dbReference type="Reactome" id="R-CEL-6798695">
    <property type="pathway name" value="Neutrophil degranulation"/>
</dbReference>
<dbReference type="Reactome" id="R-CEL-9013406">
    <property type="pathway name" value="RHOQ GTPase cycle"/>
</dbReference>
<dbReference type="PRO" id="PR:O61967"/>
<dbReference type="Proteomes" id="UP000001940">
    <property type="component" value="Chromosome V"/>
</dbReference>
<dbReference type="Bgee" id="WBGene00002632">
    <property type="expression patterns" value="Expressed in pharyngeal muscle cell (C elegans) and 4 other cell types or tissues"/>
</dbReference>
<dbReference type="ExpressionAtlas" id="O61967">
    <property type="expression patterns" value="baseline and differential"/>
</dbReference>
<dbReference type="GO" id="GO:0016323">
    <property type="term" value="C:basolateral plasma membrane"/>
    <property type="evidence" value="ECO:0000314"/>
    <property type="project" value="WormBase"/>
</dbReference>
<dbReference type="GO" id="GO:0034333">
    <property type="term" value="P:adherens junction assembly"/>
    <property type="evidence" value="ECO:0000314"/>
    <property type="project" value="ARUK-UCL"/>
</dbReference>
<dbReference type="GO" id="GO:0043297">
    <property type="term" value="P:apical junction assembly"/>
    <property type="evidence" value="ECO:0000315"/>
    <property type="project" value="WormBase"/>
</dbReference>
<dbReference type="GO" id="GO:0007155">
    <property type="term" value="P:cell adhesion"/>
    <property type="evidence" value="ECO:0007669"/>
    <property type="project" value="UniProtKB-KW"/>
</dbReference>
<dbReference type="GO" id="GO:0007043">
    <property type="term" value="P:cell-cell junction assembly"/>
    <property type="evidence" value="ECO:0000315"/>
    <property type="project" value="WormBase"/>
</dbReference>
<dbReference type="GO" id="GO:0009792">
    <property type="term" value="P:embryo development ending in birth or egg hatching"/>
    <property type="evidence" value="ECO:0000315"/>
    <property type="project" value="WormBase"/>
</dbReference>
<dbReference type="GO" id="GO:0048557">
    <property type="term" value="P:embryonic digestive tract morphogenesis"/>
    <property type="evidence" value="ECO:0000315"/>
    <property type="project" value="WormBase"/>
</dbReference>
<dbReference type="GO" id="GO:0007163">
    <property type="term" value="P:establishment or maintenance of cell polarity"/>
    <property type="evidence" value="ECO:0000270"/>
    <property type="project" value="UniProtKB"/>
</dbReference>
<dbReference type="GO" id="GO:0045199">
    <property type="term" value="P:maintenance of epithelial cell apical/basal polarity"/>
    <property type="evidence" value="ECO:0000315"/>
    <property type="project" value="WormBase"/>
</dbReference>
<dbReference type="GO" id="GO:0031346">
    <property type="term" value="P:positive regulation of cell projection organization"/>
    <property type="evidence" value="ECO:0000315"/>
    <property type="project" value="WormBase"/>
</dbReference>
<dbReference type="GO" id="GO:0015031">
    <property type="term" value="P:protein transport"/>
    <property type="evidence" value="ECO:0000270"/>
    <property type="project" value="UniProtKB"/>
</dbReference>
<dbReference type="GO" id="GO:0045108">
    <property type="term" value="P:regulation of intermediate filament polymerization or depolymerization"/>
    <property type="evidence" value="ECO:0000315"/>
    <property type="project" value="UniProtKB"/>
</dbReference>
<dbReference type="CDD" id="cd00136">
    <property type="entry name" value="PDZ_canonical"/>
    <property type="match status" value="1"/>
</dbReference>
<dbReference type="FunFam" id="3.80.10.10:FF:000779">
    <property type="entry name" value="Probable inactive serine/threonine-protein kinase DDB_G0278909"/>
    <property type="match status" value="1"/>
</dbReference>
<dbReference type="FunFam" id="2.30.42.10:FF:000360">
    <property type="entry name" value="Protein lap1"/>
    <property type="match status" value="1"/>
</dbReference>
<dbReference type="Gene3D" id="2.30.42.10">
    <property type="match status" value="1"/>
</dbReference>
<dbReference type="Gene3D" id="3.80.10.10">
    <property type="entry name" value="Ribonuclease Inhibitor"/>
    <property type="match status" value="2"/>
</dbReference>
<dbReference type="InterPro" id="IPR001611">
    <property type="entry name" value="Leu-rich_rpt"/>
</dbReference>
<dbReference type="InterPro" id="IPR003591">
    <property type="entry name" value="Leu-rich_rpt_typical-subtyp"/>
</dbReference>
<dbReference type="InterPro" id="IPR032675">
    <property type="entry name" value="LRR_dom_sf"/>
</dbReference>
<dbReference type="InterPro" id="IPR055414">
    <property type="entry name" value="LRR_R13L4/SHOC2-like"/>
</dbReference>
<dbReference type="InterPro" id="IPR001478">
    <property type="entry name" value="PDZ"/>
</dbReference>
<dbReference type="InterPro" id="IPR036034">
    <property type="entry name" value="PDZ_sf"/>
</dbReference>
<dbReference type="InterPro" id="IPR050614">
    <property type="entry name" value="Synaptic_Scaffolding_LAP-MAGUK"/>
</dbReference>
<dbReference type="PANTHER" id="PTHR23119">
    <property type="entry name" value="DISCS LARGE"/>
    <property type="match status" value="1"/>
</dbReference>
<dbReference type="PANTHER" id="PTHR23119:SF44">
    <property type="entry name" value="PROTEIN LAP4"/>
    <property type="match status" value="1"/>
</dbReference>
<dbReference type="Pfam" id="PF23598">
    <property type="entry name" value="LRR_14"/>
    <property type="match status" value="1"/>
</dbReference>
<dbReference type="Pfam" id="PF13855">
    <property type="entry name" value="LRR_8"/>
    <property type="match status" value="2"/>
</dbReference>
<dbReference type="Pfam" id="PF00595">
    <property type="entry name" value="PDZ"/>
    <property type="match status" value="1"/>
</dbReference>
<dbReference type="SMART" id="SM00364">
    <property type="entry name" value="LRR_BAC"/>
    <property type="match status" value="12"/>
</dbReference>
<dbReference type="SMART" id="SM00369">
    <property type="entry name" value="LRR_TYP"/>
    <property type="match status" value="12"/>
</dbReference>
<dbReference type="SMART" id="SM00228">
    <property type="entry name" value="PDZ"/>
    <property type="match status" value="1"/>
</dbReference>
<dbReference type="SUPFAM" id="SSF50156">
    <property type="entry name" value="PDZ domain-like"/>
    <property type="match status" value="1"/>
</dbReference>
<dbReference type="SUPFAM" id="SSF52047">
    <property type="entry name" value="RNI-like"/>
    <property type="match status" value="1"/>
</dbReference>
<dbReference type="PROSITE" id="PS51450">
    <property type="entry name" value="LRR"/>
    <property type="match status" value="14"/>
</dbReference>
<dbReference type="PROSITE" id="PS50106">
    <property type="entry name" value="PDZ"/>
    <property type="match status" value="1"/>
</dbReference>
<protein>
    <recommendedName>
        <fullName evidence="12">Protein Scribble homolog let-413</fullName>
    </recommendedName>
    <alternativeName>
        <fullName>Lethal protein 413</fullName>
    </alternativeName>
    <alternativeName>
        <fullName>Protein lap-1</fullName>
    </alternativeName>
</protein>
<name>LAP1_CAEEL</name>
<feature type="chain" id="PRO_0000188305" description="Protein Scribble homolog let-413">
    <location>
        <begin position="1"/>
        <end position="699"/>
    </location>
</feature>
<feature type="repeat" description="LRR 1">
    <location>
        <begin position="37"/>
        <end position="59"/>
    </location>
</feature>
<feature type="repeat" description="LRR 2">
    <location>
        <begin position="60"/>
        <end position="81"/>
    </location>
</feature>
<feature type="repeat" description="LRR 3">
    <location>
        <begin position="83"/>
        <end position="104"/>
    </location>
</feature>
<feature type="repeat" description="LRR 4">
    <location>
        <begin position="106"/>
        <end position="127"/>
    </location>
</feature>
<feature type="repeat" description="LRR 5">
    <location>
        <begin position="129"/>
        <end position="150"/>
    </location>
</feature>
<feature type="repeat" description="LRR 6">
    <location>
        <begin position="152"/>
        <end position="174"/>
    </location>
</feature>
<feature type="repeat" description="LRR 7">
    <location>
        <begin position="175"/>
        <end position="196"/>
    </location>
</feature>
<feature type="repeat" description="LRR 8">
    <location>
        <begin position="198"/>
        <end position="219"/>
    </location>
</feature>
<feature type="repeat" description="LRR 9">
    <location>
        <begin position="221"/>
        <end position="242"/>
    </location>
</feature>
<feature type="repeat" description="LRR 10">
    <location>
        <begin position="244"/>
        <end position="265"/>
    </location>
</feature>
<feature type="repeat" description="LRR 11">
    <location>
        <begin position="267"/>
        <end position="288"/>
    </location>
</feature>
<feature type="repeat" description="LRR 12">
    <location>
        <begin position="290"/>
        <end position="311"/>
    </location>
</feature>
<feature type="repeat" description="LRR 13">
    <location>
        <begin position="313"/>
        <end position="334"/>
    </location>
</feature>
<feature type="repeat" description="LRR 14">
    <location>
        <begin position="336"/>
        <end position="357"/>
    </location>
</feature>
<feature type="repeat" description="LRR 15">
    <location>
        <begin position="359"/>
        <end position="380"/>
    </location>
</feature>
<feature type="repeat" description="LRR 16">
    <location>
        <begin position="382"/>
        <end position="403"/>
    </location>
</feature>
<feature type="domain" description="PDZ" evidence="1">
    <location>
        <begin position="584"/>
        <end position="665"/>
    </location>
</feature>
<feature type="region of interest" description="Disordered" evidence="2">
    <location>
        <begin position="656"/>
        <end position="699"/>
    </location>
</feature>
<feature type="compositionally biased region" description="Polar residues" evidence="2">
    <location>
        <begin position="659"/>
        <end position="676"/>
    </location>
</feature>
<feature type="compositionally biased region" description="Polar residues" evidence="2">
    <location>
        <begin position="684"/>
        <end position="699"/>
    </location>
</feature>
<feature type="splice variant" id="VSP_062472" description="In isoform a." evidence="13">
    <original>EPSL</original>
    <variation>VSRP</variation>
    <location>
        <begin position="666"/>
        <end position="669"/>
    </location>
</feature>
<feature type="splice variant" id="VSP_062473" description="In isoform a." evidence="13">
    <location>
        <begin position="670"/>
        <end position="699"/>
    </location>
</feature>
<feature type="mutagenesis site" description="Abolishes membrane localization." evidence="3 6">
    <original>P</original>
    <variation>L</variation>
    <location>
        <position position="305"/>
    </location>
</feature>
<gene>
    <name evidence="16" type="primary">let-413</name>
    <name evidence="16" type="ORF">F26D11.11</name>
</gene>
<keyword id="KW-0025">Alternative splicing</keyword>
<keyword id="KW-0130">Cell adhesion</keyword>
<keyword id="KW-1003">Cell membrane</keyword>
<keyword id="KW-0433">Leucine-rich repeat</keyword>
<keyword id="KW-0472">Membrane</keyword>
<keyword id="KW-1185">Reference proteome</keyword>
<keyword id="KW-0677">Repeat</keyword>
<sequence>MPAFFCLPMACQRQVDSIDRSQSNLQAIPSDIFRFRKLEDLNLTMNNIKELDHRLFSLRHLRILDVSDNELAVLPAEIGNLTQLIELNLNRNSIAKLPDTMQNCKLLTTLNLSSNPFTRLPETICECSSITILSLNETSLTLLPSNIGSLTNLRVLEARDNLLRTIPLSIVELRKLEELDLGQNELEALPAEIGKLTSLREFYVDINSLTSLPDSISGCRMLDQLDVSENQIIRLPENLGRMPNLTDLNISINEIIELPSSFGELKRLQMLKADRNSLHNLTSEIGKCQSLTELYLGQNFLTDLPDTIGDLRQLTTLNVDCNNLSDIPDTIGNCKSLTVLSLRQNILTELPMTIGKCENLTVLDVASNKLPHLPFTVKVLYKLQALWLSENQTQSILKLSETRDDRKGIKVVTCYLLPQVDAIDGEGRSGSAQHNTDRGAFLGGPKVHFHDQADTTFEENKEAEIHLGNFERHNTPHPKTPKHKKGSIDGHMLPHEIDQPRQLSLVSNHRTSTSSFGESSNSINRDLADIRAQNGVREATLSPEREERMATSLSSLSNLAAGTQNMHTIRIQKDDTGKLGLSFAGGTSNDPAPNSNGDSGLFVTKVTPGSAAYRCGLREGDKLIRANDVNMINASQDNAMEAIKKRETVELVVLRRSPSPVSRTSEPSLNGSSHQLNHFDAGSPDSTMFVTSSTPVYAS</sequence>
<evidence type="ECO:0000255" key="1">
    <source>
        <dbReference type="PROSITE-ProRule" id="PRU00143"/>
    </source>
</evidence>
<evidence type="ECO:0000256" key="2">
    <source>
        <dbReference type="SAM" id="MobiDB-lite"/>
    </source>
</evidence>
<evidence type="ECO:0000269" key="3">
    <source>
    </source>
</evidence>
<evidence type="ECO:0000269" key="4">
    <source>
    </source>
</evidence>
<evidence type="ECO:0000269" key="5">
    <source>
    </source>
</evidence>
<evidence type="ECO:0000269" key="6">
    <source>
    </source>
</evidence>
<evidence type="ECO:0000269" key="7">
    <source>
    </source>
</evidence>
<evidence type="ECO:0000269" key="8">
    <source>
    </source>
</evidence>
<evidence type="ECO:0000269" key="9">
    <source>
    </source>
</evidence>
<evidence type="ECO:0000269" key="10">
    <source>
    </source>
</evidence>
<evidence type="ECO:0000269" key="11">
    <source>
    </source>
</evidence>
<evidence type="ECO:0000303" key="12">
    <source>
    </source>
</evidence>
<evidence type="ECO:0000305" key="13"/>
<evidence type="ECO:0000312" key="14">
    <source>
        <dbReference type="EMBL" id="CAB91651.1"/>
    </source>
</evidence>
<evidence type="ECO:0000312" key="15">
    <source>
        <dbReference type="WormBase" id="F26D11.11a"/>
    </source>
</evidence>
<evidence type="ECO:0000312" key="16">
    <source>
        <dbReference type="WormBase" id="F26D11.11b"/>
    </source>
</evidence>
<reference evidence="13" key="1">
    <citation type="journal article" date="2000" name="Nat. Cell Biol.">
        <title>LET-413 is a basolateral protein required for the assembly of adherens junctions in Caenorhabditis elegans.</title>
        <authorList>
            <person name="Legouis R."/>
            <person name="Gansmuller A."/>
            <person name="Sookhareea S."/>
            <person name="Bosher J.M."/>
            <person name="Baillie D.L."/>
            <person name="Labouesse M."/>
        </authorList>
    </citation>
    <scope>NUCLEOTIDE SEQUENCE [MRNA] (ISOFORM A)</scope>
    <scope>FUNCTION</scope>
    <scope>SUBCELLULAR LOCATION</scope>
    <scope>DEVELOPMENTAL STAGE</scope>
    <scope>MUTAGENESIS OF PRO-305</scope>
    <scope>DISRUPTION PHENOTYPE</scope>
    <source>
        <strain evidence="3">Bristol N2</strain>
    </source>
</reference>
<reference key="2">
    <citation type="journal article" date="1998" name="Science">
        <title>Genome sequence of the nematode C. elegans: a platform for investigating biology.</title>
        <authorList>
            <consortium name="The C. elegans sequencing consortium"/>
        </authorList>
    </citation>
    <scope>NUCLEOTIDE SEQUENCE [LARGE SCALE GENOMIC DNA]</scope>
    <scope>ALTERNATIVE SPLICING</scope>
    <source>
        <strain>Bristol N2</strain>
    </source>
</reference>
<reference evidence="13 14" key="3">
    <citation type="journal article" date="2003" name="EMBO Rep.">
        <title>Basolateral targeting by leucine-rich repeat domains in epithelial cells.</title>
        <authorList>
            <person name="Legouis R."/>
            <person name="Jaulin-Bastard F."/>
            <person name="Schott S."/>
            <person name="Navarro C."/>
            <person name="Borg J.-P."/>
            <person name="Labouesse M."/>
        </authorList>
    </citation>
    <scope>SUBCELLULAR LOCATION</scope>
    <scope>MUTAGENESIS OF PRO-305</scope>
</reference>
<reference evidence="13" key="4">
    <citation type="journal article" date="2001" name="J. Cell Sci.">
        <title>Assembly of C. elegans apical junctions involves positioning and compaction by LET-413 and protein aggregation by the MAGUK protein DLG-1.</title>
        <authorList>
            <person name="McMahon L."/>
            <person name="Legouis R."/>
            <person name="Vonesch J.L."/>
            <person name="Labouesse M."/>
        </authorList>
    </citation>
    <scope>FUNCTION</scope>
    <scope>SUBCELLULAR LOCATION</scope>
    <scope>TISSUE SPECIFICITY</scope>
    <scope>DEVELOPMENTAL STAGE</scope>
    <scope>DISRUPTION PHENOTYPE</scope>
</reference>
<reference key="5">
    <citation type="journal article" date="2001" name="Nat. Cell Biol.">
        <title>Cooperative regulation of AJM-1 controls junctional integrity in Caenorhabditis elegans epithelia.</title>
        <authorList>
            <person name="Koeppen M."/>
            <person name="Simske J.S."/>
            <person name="Sims P.A."/>
            <person name="Firestein B.L."/>
            <person name="Hall D.H."/>
            <person name="Radice A.D."/>
            <person name="Rongo C."/>
            <person name="Hardin J.D."/>
        </authorList>
    </citation>
    <scope>FUNCTION</scope>
</reference>
<reference evidence="13" key="6">
    <citation type="journal article" date="2004" name="Dev. Biol.">
        <title>The apical disposition of the Caenorhabditis elegans intestinal terminal web is maintained by LET-413.</title>
        <authorList>
            <person name="Bossinger O."/>
            <person name="Fukushige T."/>
            <person name="Claeys M."/>
            <person name="Borgonie G."/>
            <person name="McGhee J.D."/>
        </authorList>
    </citation>
    <scope>FUNCTION</scope>
    <scope>TISSUE SPECIFICITY</scope>
</reference>
<reference key="7">
    <citation type="journal article" date="2008" name="J. Cell Sci.">
        <title>Dynamic analysis identifies novel roles for DLG-1 subdomains in AJM-1 recruitment and LET-413-dependent apical focusing.</title>
        <authorList>
            <person name="Lockwood C.A."/>
            <person name="Lynch A.M."/>
            <person name="Hardin J."/>
        </authorList>
    </citation>
    <scope>FUNCTION</scope>
</reference>
<reference evidence="13" key="8">
    <citation type="journal article" date="2009" name="Dev. Biol.">
        <title>Increased IP3/Ca2+ signaling compensates depletion of LET-413/DLG-1 in C. elegans epithelial junction assembly.</title>
        <authorList>
            <person name="Pilipiuk J."/>
            <person name="Lefebvre C."/>
            <person name="Wiesenfahrt T."/>
            <person name="Legouis R."/>
            <person name="Bossinger O."/>
        </authorList>
    </citation>
    <scope>FUNCTION</scope>
    <scope>SUBCELLULAR LOCATION</scope>
    <scope>DISRUPTION PHENOTYPE</scope>
</reference>
<reference key="9">
    <citation type="journal article" date="2016" name="BMC Biol.">
        <title>A tissue-specific protein purification approach in Caenorhabditis elegans identifies novel interaction partners of DLG-1/Discs large.</title>
        <authorList>
            <person name="Waaijers S."/>
            <person name="Munoz J."/>
            <person name="Berends C."/>
            <person name="Ramalho J.J."/>
            <person name="Goerdayal S.S."/>
            <person name="Low T.Y."/>
            <person name="Zoumaro-Djayoon A.D."/>
            <person name="Hoffmann M."/>
            <person name="Koorman T."/>
            <person name="Tas R.P."/>
            <person name="Harterink M."/>
            <person name="Seelk S."/>
            <person name="Kerver J."/>
            <person name="Hoogenraad C.C."/>
            <person name="Bossinger O."/>
            <person name="Tursun B."/>
            <person name="van den Heuvel S."/>
            <person name="Heck A.J."/>
            <person name="Boxem M."/>
        </authorList>
    </citation>
    <scope>IDENTIFICATION BY MASS SPECTROMETRY</scope>
    <scope>SUBCELLULAR LOCATION</scope>
    <scope>TISSUE SPECIFICITY</scope>
</reference>
<reference evidence="13" key="10">
    <citation type="journal article" date="2021" name="PLoS Genet.">
        <title>Caenorhabditis elegans LET-413 Scribble is essential in the epidermis for growth, viability, and directional outgrowth of epithelial seam cells.</title>
        <authorList>
            <person name="Riga A."/>
            <person name="Cravo J."/>
            <person name="Schmidt R."/>
            <person name="Pires H.R."/>
            <person name="Castiglioni V.G."/>
            <person name="van den Heuvel S."/>
            <person name="Boxem M."/>
        </authorList>
    </citation>
    <scope>FUNCTION</scope>
    <scope>SUBCELLULAR LOCATION</scope>
    <scope>TISSUE SPECIFICITY</scope>
    <scope>DEVELOPMENTAL STAGE</scope>
</reference>
<organism>
    <name type="scientific">Caenorhabditis elegans</name>
    <dbReference type="NCBI Taxonomy" id="6239"/>
    <lineage>
        <taxon>Eukaryota</taxon>
        <taxon>Metazoa</taxon>
        <taxon>Ecdysozoa</taxon>
        <taxon>Nematoda</taxon>
        <taxon>Chromadorea</taxon>
        <taxon>Rhabditida</taxon>
        <taxon>Rhabditina</taxon>
        <taxon>Rhabditomorpha</taxon>
        <taxon>Rhabditoidea</taxon>
        <taxon>Rhabditidae</taxon>
        <taxon>Peloderinae</taxon>
        <taxon>Caenorhabditis</taxon>
    </lineage>
</organism>
<accession>O61967</accession>
<accession>Q6A580</accession>
<accession>Q9NFN7</accession>
<comment type="function">
    <text evidence="3 4 5 7 8 9 11">Critical role in assembling adherens junctions; adapter protein involved in polarizing protein trafficking in epithelial cells. Necessary to maintain, not establish, the entire terminal web (organelle-depleted, intermediate filament-rich layer of cytoplasm that underlies the apical microvilli of polarized epithelial cells) or brush border assembly at the apical surface gut cells. Required for correct localization of ifb-2 intermediate filaments in the terminal web. Required for dlg-1 and hmr-1 lateral localization (PubMed:18411252, PubMed:34673778). Maintains cell polarity by correctly positioning adherens junction protein components including ajm-1 and hmp-1 at discrete subapical positions (PubMed:11493666). Plays a role in the correct localization of the dlg-1-ajm-1 complex, polarity protein par-3, and actin microfilament to the apical junction of spermatheca cells, and is required for ovulation (PubMed:11715019, PubMed:19109941). Regulates the establishment of newly-formed epithelia in conjunction with dlg-1 (PubMed:19109941). Required in the epidermis during larval development (PubMed:34673778). Plays a role in cellular junction integrity and in the directed outgrowth of seam cells, towards neighboring seam cells, during larval development; probably acts by promoting the assembly and stability of dlg-1 at apical junctions (PubMed:34673778).</text>
</comment>
<comment type="subcellular location">
    <subcellularLocation>
        <location evidence="3 4 6 9 10 11">Basolateral cell membrane</location>
        <topology evidence="3 6">Peripheral membrane protein</topology>
    </subcellularLocation>
    <text evidence="3 4 6 9 11">Basolateral membrane of epithelial cells.</text>
</comment>
<comment type="alternative products">
    <event type="alternative splicing"/>
    <isoform>
        <id>O61967-1</id>
        <name evidence="16">b</name>
        <sequence type="displayed"/>
    </isoform>
    <isoform>
        <id>O61967-2</id>
        <name evidence="15">a</name>
        <sequence type="described" ref="VSP_062472 VSP_062473"/>
    </isoform>
</comment>
<comment type="tissue specificity">
    <text evidence="4 7 10 11">Expressed in the terminal web of the intestine (PubMed:15063180, PubMed:27506200). Expressed in seam cells (PubMed:27506200). Expressed in the basolateral surfaces of epithelia and the nervous system (PubMed:11493666). Expressed in the intestine, epidermis, excretory canal, reproductive system including vulva, uterus and spermatheca, in both larval and adult stage animals (PubMed:34673778).</text>
</comment>
<comment type="developmental stage">
    <text evidence="3 4 11">Expressed in all embryonic epithelial cells. Expressed in cell membrane from the early stage until before enclosure where it becomes restricted to the basolateral surfaces of epithelia and the nervous system (PubMed:11493666). From the bean embryonic stage onwards, localizes to the basolateral membrane domain and at the intracellular junction of epidermal and intestinal cells (PubMed:34673778).</text>
</comment>
<comment type="disruption phenotype">
    <text evidence="3 4 9">Worms display a severely affected epithelial integrity, leading to abnormal morphogenesis of the pharynx, intestine and embryo. RNAi-mediated knockdown causes defect in the apical junctions between cells, electron-dense structures are observed which are discontinuous and greatly extended along the lateral membrane, or absent (PubMed:11493666). Results in polarity defects and strong cellular adhesion (PubMed:11493666). Disorganizes the ajm-1 containing apical junctions in embryos (PubMed:11493666). Mislocalizes hmp-1 and ajm-1 from the top of the lateral membrane to the top, middle and bottom in the case of hmp-1, and mostly to the middle for ajm-1 (PubMed:11493666). Alters adherens junction protein distribution to resemble immature epidermal cells in wild-type animals (PubMed:11493666). Results in dlg-1 discontinuous localization in the epidermis and intestine (PubMed:11493666). Accumulates sperm at the proximal gonad and not within the spermatheca lumen (PubMed:19109941). Disorganizes the spermatheca, showing no electron-dense structures at the lateral junctions but instead shows numerous cytoplasmic vesicles with irregular patches of electron density (PubMed:19109941). Forms large, irregular and misaligned bundles of F-actin around the spermatheca due to the rupturing of junctional belt-like pattern and disorganization of the apical junction (PubMed:19109941). Mislocalizes dlg-1, ajm-1 and par-3, thereby fragmenting the continuous belt around the apex (PubMed:19109941). Exhibits ovulation defect due to dysfunction of spermatheca epithelia resulting in a 40-minute delay between nuclear envelope breakdown and the entry of oocytes into the spermatheca (PubMed:19109941). Reduces laid eggs and causes 100% sterility due to somatic gonad defects (PubMed:19109941). Exhibits endomitotic oocytes (Emo) phenotype, where developing oocytes are arrested during mitotic anaphase, causing them to accumulate in the proximal ovary (PubMed:19109941). Delays the arrival of the dlg-1-ajm-1 complex to the apical junction during the comma stage of embryonic development (PubMed:19109941).</text>
</comment>
<comment type="similarity">
    <text evidence="13">Belongs to the LAP (LRR and PDZ) protein family.</text>
</comment>